<accession>Q2FWN9</accession>
<proteinExistence type="evidence at protein level"/>
<comment type="similarity">
    <text evidence="3">Belongs to the aerolysin family.</text>
</comment>
<dbReference type="EMBL" id="CP000253">
    <property type="protein sequence ID" value="ABD31283.1"/>
    <property type="molecule type" value="Genomic_DNA"/>
</dbReference>
<dbReference type="RefSeq" id="YP_500726.1">
    <property type="nucleotide sequence ID" value="NC_007795.1"/>
</dbReference>
<dbReference type="PDB" id="5K59">
    <property type="method" value="X-ray"/>
    <property type="resolution" value="2.84 A"/>
    <property type="chains" value="C/D=33-351"/>
</dbReference>
<dbReference type="PDB" id="6RHV">
    <property type="method" value="X-ray"/>
    <property type="resolution" value="2.29 A"/>
    <property type="chains" value="H=28-351"/>
</dbReference>
<dbReference type="PDB" id="6RHW">
    <property type="method" value="X-ray"/>
    <property type="resolution" value="2.75 A"/>
    <property type="chains" value="H=28-351"/>
</dbReference>
<dbReference type="PDB" id="7T87">
    <property type="method" value="X-ray"/>
    <property type="resolution" value="3.00 A"/>
    <property type="chains" value="B=21-351"/>
</dbReference>
<dbReference type="PDBsum" id="5K59"/>
<dbReference type="PDBsum" id="6RHV"/>
<dbReference type="PDBsum" id="6RHW"/>
<dbReference type="PDBsum" id="7T87"/>
<dbReference type="SMR" id="Q2FWN9"/>
<dbReference type="STRING" id="93061.SAOUHSC_02243"/>
<dbReference type="PaxDb" id="1280-SAXN108_2110"/>
<dbReference type="ABCD" id="Q2FWN9">
    <property type="antibodies" value="4 sequenced antibodies"/>
</dbReference>
<dbReference type="GeneID" id="3919664"/>
<dbReference type="KEGG" id="sao:SAOUHSC_02243"/>
<dbReference type="PATRIC" id="fig|93061.5.peg.2036"/>
<dbReference type="eggNOG" id="ENOG5030531">
    <property type="taxonomic scope" value="Bacteria"/>
</dbReference>
<dbReference type="HOGENOM" id="CLU_865755_0_0_9"/>
<dbReference type="OrthoDB" id="2409241at2"/>
<dbReference type="PRO" id="PR:Q2FWN9"/>
<dbReference type="Proteomes" id="UP000008816">
    <property type="component" value="Chromosome"/>
</dbReference>
<dbReference type="GO" id="GO:0005576">
    <property type="term" value="C:extracellular region"/>
    <property type="evidence" value="ECO:0007669"/>
    <property type="project" value="InterPro"/>
</dbReference>
<dbReference type="GO" id="GO:0051715">
    <property type="term" value="P:cytolysis in another organism"/>
    <property type="evidence" value="ECO:0007669"/>
    <property type="project" value="InterPro"/>
</dbReference>
<dbReference type="Gene3D" id="2.70.240.10">
    <property type="entry name" value="Leukocidin/porin MspA"/>
    <property type="match status" value="1"/>
</dbReference>
<dbReference type="InterPro" id="IPR003963">
    <property type="entry name" value="Bi-component_toxin_staph"/>
</dbReference>
<dbReference type="InterPro" id="IPR016183">
    <property type="entry name" value="Leukocidin/Hemolysin_toxin"/>
</dbReference>
<dbReference type="InterPro" id="IPR036435">
    <property type="entry name" value="Leukocidin/porin_MspA_sf"/>
</dbReference>
<dbReference type="Pfam" id="PF07968">
    <property type="entry name" value="Leukocidin"/>
    <property type="match status" value="1"/>
</dbReference>
<dbReference type="PRINTS" id="PR01468">
    <property type="entry name" value="BICOMPNTOXIN"/>
</dbReference>
<dbReference type="SUPFAM" id="SSF56959">
    <property type="entry name" value="Leukocidin-like"/>
    <property type="match status" value="1"/>
</dbReference>
<keyword id="KW-0002">3D-structure</keyword>
<keyword id="KW-1185">Reference proteome</keyword>
<keyword id="KW-0732">Signal</keyword>
<gene>
    <name type="ordered locus">SAOUHSC_02243</name>
</gene>
<feature type="signal peptide" evidence="1">
    <location>
        <begin position="1"/>
        <end position="27"/>
    </location>
</feature>
<feature type="chain" id="PRO_0000298646" description="Uncharacterized leukocidin-like protein 2">
    <location>
        <begin position="28"/>
        <end position="351"/>
    </location>
</feature>
<feature type="region of interest" description="Disordered" evidence="2">
    <location>
        <begin position="27"/>
        <end position="71"/>
    </location>
</feature>
<feature type="compositionally biased region" description="Basic and acidic residues" evidence="2">
    <location>
        <begin position="30"/>
        <end position="60"/>
    </location>
</feature>
<feature type="strand" evidence="4">
    <location>
        <begin position="69"/>
        <end position="82"/>
    </location>
</feature>
<feature type="turn" evidence="4">
    <location>
        <begin position="83"/>
        <end position="86"/>
    </location>
</feature>
<feature type="strand" evidence="4">
    <location>
        <begin position="87"/>
        <end position="97"/>
    </location>
</feature>
<feature type="strand" evidence="4">
    <location>
        <begin position="101"/>
        <end position="115"/>
    </location>
</feature>
<feature type="strand" evidence="4">
    <location>
        <begin position="119"/>
        <end position="122"/>
    </location>
</feature>
<feature type="strand" evidence="4">
    <location>
        <begin position="126"/>
        <end position="128"/>
    </location>
</feature>
<feature type="strand" evidence="4">
    <location>
        <begin position="130"/>
        <end position="146"/>
    </location>
</feature>
<feature type="strand" evidence="4">
    <location>
        <begin position="150"/>
        <end position="157"/>
    </location>
</feature>
<feature type="strand" evidence="5">
    <location>
        <begin position="159"/>
        <end position="161"/>
    </location>
</feature>
<feature type="strand" evidence="4">
    <location>
        <begin position="163"/>
        <end position="176"/>
    </location>
</feature>
<feature type="strand" evidence="4">
    <location>
        <begin position="179"/>
        <end position="182"/>
    </location>
</feature>
<feature type="strand" evidence="4">
    <location>
        <begin position="187"/>
        <end position="197"/>
    </location>
</feature>
<feature type="strand" evidence="4">
    <location>
        <begin position="202"/>
        <end position="207"/>
    </location>
</feature>
<feature type="strand" evidence="4">
    <location>
        <begin position="213"/>
        <end position="222"/>
    </location>
</feature>
<feature type="strand" evidence="4">
    <location>
        <begin position="224"/>
        <end position="227"/>
    </location>
</feature>
<feature type="strand" evidence="4">
    <location>
        <begin position="230"/>
        <end position="233"/>
    </location>
</feature>
<feature type="turn" evidence="4">
    <location>
        <begin position="237"/>
        <end position="240"/>
    </location>
</feature>
<feature type="helix" evidence="4">
    <location>
        <begin position="252"/>
        <end position="255"/>
    </location>
</feature>
<feature type="helix" evidence="4">
    <location>
        <begin position="259"/>
        <end position="261"/>
    </location>
</feature>
<feature type="helix" evidence="4">
    <location>
        <begin position="264"/>
        <end position="267"/>
    </location>
</feature>
<feature type="strand" evidence="4">
    <location>
        <begin position="274"/>
        <end position="281"/>
    </location>
</feature>
<feature type="strand" evidence="4">
    <location>
        <begin position="286"/>
        <end position="302"/>
    </location>
</feature>
<feature type="strand" evidence="4">
    <location>
        <begin position="305"/>
        <end position="307"/>
    </location>
</feature>
<feature type="strand" evidence="4">
    <location>
        <begin position="312"/>
        <end position="329"/>
    </location>
</feature>
<feature type="turn" evidence="4">
    <location>
        <begin position="330"/>
        <end position="333"/>
    </location>
</feature>
<feature type="strand" evidence="4">
    <location>
        <begin position="334"/>
        <end position="345"/>
    </location>
</feature>
<reference key="1">
    <citation type="book" date="2006" name="Gram positive pathogens, 2nd edition">
        <title>The Staphylococcus aureus NCTC 8325 genome.</title>
        <editorList>
            <person name="Fischetti V."/>
            <person name="Novick R."/>
            <person name="Ferretti J."/>
            <person name="Portnoy D."/>
            <person name="Rood J."/>
        </editorList>
        <authorList>
            <person name="Gillaspy A.F."/>
            <person name="Worrell V."/>
            <person name="Orvis J."/>
            <person name="Roe B.A."/>
            <person name="Dyer D.W."/>
            <person name="Iandolo J.J."/>
        </authorList>
    </citation>
    <scope>NUCLEOTIDE SEQUENCE [LARGE SCALE GENOMIC DNA]</scope>
    <source>
        <strain>NCTC 8325 / PS 47</strain>
    </source>
</reference>
<protein>
    <recommendedName>
        <fullName>Uncharacterized leukocidin-like protein 2</fullName>
    </recommendedName>
</protein>
<sequence length="351" mass="40434">MKNKKRVLIASSLSCAILLLSAATTQANSAHKDSQDQNKKEHVDKSQQKDKRNVTNKDKNSTAPDDIGKNGKITKRTETVYDEKTNILQNLQFDFIDDPTYDKNVLLVKKQGSIHSNLKFESHKEEKNSNWLKYPSEYHVDFQVKRNRKTEILDQLPKNKISTAKVDSTFSYSSGGKFDSTKGIGRTSSNSYSKTISYNQQNYDTIASGKNNNWHVHWSVIANDLKYGGEVKNRNDELLFYRNTRIATVENPELSFASKYRYPALVRSGFNPEFLTYLSNEKSNEKTQFEVTYTRNQDILKNRPGIHYAPPILEKNKDGQRLIVTYEVDWKNKTVKVVDKYSDDNKPYKEG</sequence>
<organism>
    <name type="scientific">Staphylococcus aureus (strain NCTC 8325 / PS 47)</name>
    <dbReference type="NCBI Taxonomy" id="93061"/>
    <lineage>
        <taxon>Bacteria</taxon>
        <taxon>Bacillati</taxon>
        <taxon>Bacillota</taxon>
        <taxon>Bacilli</taxon>
        <taxon>Bacillales</taxon>
        <taxon>Staphylococcaceae</taxon>
        <taxon>Staphylococcus</taxon>
    </lineage>
</organism>
<evidence type="ECO:0000255" key="1"/>
<evidence type="ECO:0000256" key="2">
    <source>
        <dbReference type="SAM" id="MobiDB-lite"/>
    </source>
</evidence>
<evidence type="ECO:0000305" key="3"/>
<evidence type="ECO:0007829" key="4">
    <source>
        <dbReference type="PDB" id="6RHV"/>
    </source>
</evidence>
<evidence type="ECO:0007829" key="5">
    <source>
        <dbReference type="PDB" id="7T87"/>
    </source>
</evidence>
<name>LUKL2_STAA8</name>